<sequence length="303" mass="33280">MADAASQVLLGSGLTILSQPLMYVKVLIQVGYEPLAPTVGRNIFGRQVCQLPGLFCYAQHIASIDGKRGLFTGLTPRLCSGVLGTVVHGKVLQHYQECDKAEESGSGNVQKEVSSSFDRVIKETTREMMARSAATLITHPFHVITLRSMVQFIGRESKYCGLCDSIATIYREEGILGFFAGLIPRLLGDIISLWLCNSLAYLVNTYALDSGVSTMNEMKSYSQAVTGFFASMLTYPFVLVSNLMAVNNCGLAGGCPPYAPIYSSWIDCWCMLQKEGNMSRGNSLFFRKVPFGKTYCCDLRMLI</sequence>
<dbReference type="EMBL" id="AB042815">
    <property type="protein sequence ID" value="BAA95942.1"/>
    <property type="molecule type" value="mRNA"/>
</dbReference>
<dbReference type="EMBL" id="BT020931">
    <property type="protein sequence ID" value="AAX08948.1"/>
    <property type="molecule type" value="mRNA"/>
</dbReference>
<dbReference type="EMBL" id="BC150080">
    <property type="protein sequence ID" value="AAI50081.1"/>
    <property type="molecule type" value="mRNA"/>
</dbReference>
<dbReference type="RefSeq" id="NP_001304265.1">
    <property type="nucleotide sequence ID" value="NM_001317336.1"/>
</dbReference>
<dbReference type="RefSeq" id="NP_788807.3">
    <property type="nucleotide sequence ID" value="NM_176634.4"/>
</dbReference>
<dbReference type="SMR" id="Q9N285"/>
<dbReference type="FunCoup" id="Q9N285">
    <property type="interactions" value="2968"/>
</dbReference>
<dbReference type="STRING" id="9913.ENSBTAP00000024956"/>
<dbReference type="PaxDb" id="9913-ENSBTAP00000024956"/>
<dbReference type="Ensembl" id="ENSBTAT00000024956.6">
    <property type="protein sequence ID" value="ENSBTAP00000024956.6"/>
    <property type="gene ID" value="ENSBTAG00000018742.7"/>
</dbReference>
<dbReference type="GeneID" id="337927"/>
<dbReference type="KEGG" id="bta:337927"/>
<dbReference type="CTD" id="23788"/>
<dbReference type="VGNC" id="VGNC:31717">
    <property type="gene designation" value="MTCH2"/>
</dbReference>
<dbReference type="eggNOG" id="KOG2745">
    <property type="taxonomic scope" value="Eukaryota"/>
</dbReference>
<dbReference type="GeneTree" id="ENSGT00390000000020"/>
<dbReference type="HOGENOM" id="CLU_058300_2_0_1"/>
<dbReference type="InParanoid" id="Q9N285"/>
<dbReference type="OMA" id="HPFHVIA"/>
<dbReference type="OrthoDB" id="10253709at2759"/>
<dbReference type="TreeFam" id="TF313721"/>
<dbReference type="Proteomes" id="UP000009136">
    <property type="component" value="Chromosome 15"/>
</dbReference>
<dbReference type="GO" id="GO:0016020">
    <property type="term" value="C:membrane"/>
    <property type="evidence" value="ECO:0000318"/>
    <property type="project" value="GO_Central"/>
</dbReference>
<dbReference type="GO" id="GO:0005741">
    <property type="term" value="C:mitochondrial outer membrane"/>
    <property type="evidence" value="ECO:0000250"/>
    <property type="project" value="UniProtKB"/>
</dbReference>
<dbReference type="GO" id="GO:0005739">
    <property type="term" value="C:mitochondrion"/>
    <property type="evidence" value="ECO:0000318"/>
    <property type="project" value="GO_Central"/>
</dbReference>
<dbReference type="GO" id="GO:0032977">
    <property type="term" value="F:membrane insertase activity"/>
    <property type="evidence" value="ECO:0000250"/>
    <property type="project" value="UniProtKB"/>
</dbReference>
<dbReference type="GO" id="GO:0071478">
    <property type="term" value="P:cellular response to radiation"/>
    <property type="evidence" value="ECO:0007669"/>
    <property type="project" value="Ensembl"/>
</dbReference>
<dbReference type="GO" id="GO:0090152">
    <property type="term" value="P:establishment of protein localization to mitochondrial membrane involved in mitochondrial fission"/>
    <property type="evidence" value="ECO:0007669"/>
    <property type="project" value="Ensembl"/>
</dbReference>
<dbReference type="GO" id="GO:0061484">
    <property type="term" value="P:hematopoietic stem cell homeostasis"/>
    <property type="evidence" value="ECO:0007669"/>
    <property type="project" value="Ensembl"/>
</dbReference>
<dbReference type="GO" id="GO:0035701">
    <property type="term" value="P:hematopoietic stem cell migration"/>
    <property type="evidence" value="ECO:0007669"/>
    <property type="project" value="Ensembl"/>
</dbReference>
<dbReference type="GO" id="GO:0097284">
    <property type="term" value="P:hepatocyte apoptotic process"/>
    <property type="evidence" value="ECO:0007669"/>
    <property type="project" value="Ensembl"/>
</dbReference>
<dbReference type="GO" id="GO:0006089">
    <property type="term" value="P:lactate metabolic process"/>
    <property type="evidence" value="ECO:0007669"/>
    <property type="project" value="Ensembl"/>
</dbReference>
<dbReference type="GO" id="GO:0055088">
    <property type="term" value="P:lipid homeostasis"/>
    <property type="evidence" value="ECO:0000250"/>
    <property type="project" value="UniProtKB"/>
</dbReference>
<dbReference type="GO" id="GO:0042775">
    <property type="term" value="P:mitochondrial ATP synthesis coupled electron transport"/>
    <property type="evidence" value="ECO:0007669"/>
    <property type="project" value="Ensembl"/>
</dbReference>
<dbReference type="GO" id="GO:0045820">
    <property type="term" value="P:negative regulation of glycolytic process"/>
    <property type="evidence" value="ECO:0007669"/>
    <property type="project" value="Ensembl"/>
</dbReference>
<dbReference type="GO" id="GO:0010917">
    <property type="term" value="P:negative regulation of mitochondrial membrane potential"/>
    <property type="evidence" value="ECO:0007669"/>
    <property type="project" value="Ensembl"/>
</dbReference>
<dbReference type="GO" id="GO:0043065">
    <property type="term" value="P:positive regulation of apoptotic process"/>
    <property type="evidence" value="ECO:0000250"/>
    <property type="project" value="UniProtKB"/>
</dbReference>
<dbReference type="GO" id="GO:1902231">
    <property type="term" value="P:positive regulation of intrinsic apoptotic signaling pathway in response to DNA damage"/>
    <property type="evidence" value="ECO:0007669"/>
    <property type="project" value="Ensembl"/>
</dbReference>
<dbReference type="GO" id="GO:2000738">
    <property type="term" value="P:positive regulation of stem cell differentiation"/>
    <property type="evidence" value="ECO:0000250"/>
    <property type="project" value="UniProtKB"/>
</dbReference>
<dbReference type="GO" id="GO:0045040">
    <property type="term" value="P:protein insertion into mitochondrial outer membrane"/>
    <property type="evidence" value="ECO:0000250"/>
    <property type="project" value="UniProtKB"/>
</dbReference>
<dbReference type="GO" id="GO:0010635">
    <property type="term" value="P:regulation of mitochondrial fusion"/>
    <property type="evidence" value="ECO:0000250"/>
    <property type="project" value="UniProtKB"/>
</dbReference>
<dbReference type="GO" id="GO:1902108">
    <property type="term" value="P:regulation of mitochondrial membrane permeability involved in apoptotic process"/>
    <property type="evidence" value="ECO:0007669"/>
    <property type="project" value="Ensembl"/>
</dbReference>
<dbReference type="FunFam" id="1.50.40.10:FF:000035">
    <property type="entry name" value="Mitochondrial carrier homolog 2 variant"/>
    <property type="match status" value="1"/>
</dbReference>
<dbReference type="Gene3D" id="1.50.40.10">
    <property type="entry name" value="Mitochondrial carrier domain"/>
    <property type="match status" value="1"/>
</dbReference>
<dbReference type="InterPro" id="IPR018108">
    <property type="entry name" value="Mitochondrial_sb/sol_carrier"/>
</dbReference>
<dbReference type="InterPro" id="IPR023395">
    <property type="entry name" value="Mt_carrier_dom_sf"/>
</dbReference>
<dbReference type="PANTHER" id="PTHR10780">
    <property type="entry name" value="MITOCHONDRIAL CARRIER HOMOLOG"/>
    <property type="match status" value="1"/>
</dbReference>
<dbReference type="PANTHER" id="PTHR10780:SF20">
    <property type="entry name" value="MITOCHONDRIAL CARRIER HOMOLOG 2"/>
    <property type="match status" value="1"/>
</dbReference>
<dbReference type="Pfam" id="PF00153">
    <property type="entry name" value="Mito_carr"/>
    <property type="match status" value="1"/>
</dbReference>
<dbReference type="SUPFAM" id="SSF103506">
    <property type="entry name" value="Mitochondrial carrier"/>
    <property type="match status" value="1"/>
</dbReference>
<dbReference type="PROSITE" id="PS50920">
    <property type="entry name" value="SOLCAR"/>
    <property type="match status" value="2"/>
</dbReference>
<comment type="function">
    <text evidence="1 2">Protein insertase that mediates insertion of transmembrane proteins into the mitochondrial outer membrane. Catalyzes insertion of proteins with alpha-helical transmembrane regions, such as signal-anchored, tail-anchored and multi-pass membrane proteins. Does not mediate insertion of beta-barrel transmembrane proteins (By similarity). Also acts as a receptor for the truncated form of pro-apoptotic BH3-interacting domain death agonist (p15 BID) and has therefore a critical function in apoptosis. Regulates the quiescence/cycling of hematopoietic stem cells (HSCs). Acts as a regulator of mitochondrial fusion, essential for the naive-to-primed interconversion of embryonic stem cells (ESCs). Acts as a regulator of lipid homeostasis and has a regulatory role in adipocyte differentiation and biology (By similarity).</text>
</comment>
<comment type="subunit">
    <text evidence="1">Interacts with p15BID.</text>
</comment>
<comment type="subcellular location">
    <subcellularLocation>
        <location evidence="1">Mitochondrion outer membrane</location>
        <topology evidence="3">Multi-pass membrane protein</topology>
    </subcellularLocation>
</comment>
<comment type="similarity">
    <text evidence="4">Belongs to the mitochondrial carrier (TC 2.A.29) family.</text>
</comment>
<accession>Q9N285</accession>
<accession>A6QR21</accession>
<accession>F1MR38</accession>
<accession>Q5E9I9</accession>
<keyword id="KW-0007">Acetylation</keyword>
<keyword id="KW-0472">Membrane</keyword>
<keyword id="KW-0496">Mitochondrion</keyword>
<keyword id="KW-1000">Mitochondrion outer membrane</keyword>
<keyword id="KW-1185">Reference proteome</keyword>
<keyword id="KW-0677">Repeat</keyword>
<keyword id="KW-0812">Transmembrane</keyword>
<keyword id="KW-1133">Transmembrane helix</keyword>
<name>MTCH2_BOVIN</name>
<organism>
    <name type="scientific">Bos taurus</name>
    <name type="common">Bovine</name>
    <dbReference type="NCBI Taxonomy" id="9913"/>
    <lineage>
        <taxon>Eukaryota</taxon>
        <taxon>Metazoa</taxon>
        <taxon>Chordata</taxon>
        <taxon>Craniata</taxon>
        <taxon>Vertebrata</taxon>
        <taxon>Euteleostomi</taxon>
        <taxon>Mammalia</taxon>
        <taxon>Eutheria</taxon>
        <taxon>Laurasiatheria</taxon>
        <taxon>Artiodactyla</taxon>
        <taxon>Ruminantia</taxon>
        <taxon>Pecora</taxon>
        <taxon>Bovidae</taxon>
        <taxon>Bovinae</taxon>
        <taxon>Bos</taxon>
    </lineage>
</organism>
<protein>
    <recommendedName>
        <fullName>Mitochondrial carrier homolog 2</fullName>
    </recommendedName>
</protein>
<feature type="initiator methionine" description="Removed" evidence="2">
    <location>
        <position position="1"/>
    </location>
</feature>
<feature type="chain" id="PRO_0000090636" description="Mitochondrial carrier homolog 2">
    <location>
        <begin position="2"/>
        <end position="303"/>
    </location>
</feature>
<feature type="topological domain" description="Mitochondrial intermembrane" evidence="4">
    <location>
        <begin position="2"/>
        <end position="15"/>
    </location>
</feature>
<feature type="transmembrane region" description="Helical; Name=1" evidence="3">
    <location>
        <begin position="16"/>
        <end position="36"/>
    </location>
</feature>
<feature type="topological domain" description="Cytoplasmic" evidence="4">
    <location>
        <begin position="37"/>
        <end position="77"/>
    </location>
</feature>
<feature type="transmembrane region" description="Helical; Name=2" evidence="3">
    <location>
        <begin position="78"/>
        <end position="92"/>
    </location>
</feature>
<feature type="topological domain" description="Mitochondrial intermembrane" evidence="4">
    <location>
        <begin position="93"/>
        <end position="135"/>
    </location>
</feature>
<feature type="transmembrane region" description="Helical; Name=3" evidence="3">
    <location>
        <begin position="136"/>
        <end position="156"/>
    </location>
</feature>
<feature type="topological domain" description="Cytoplasmic" evidence="4">
    <location>
        <begin position="157"/>
        <end position="180"/>
    </location>
</feature>
<feature type="transmembrane region" description="Helical; Name=4" evidence="3">
    <location>
        <begin position="181"/>
        <end position="199"/>
    </location>
</feature>
<feature type="topological domain" description="Mitochondrial intermembrane" evidence="4">
    <location>
        <begin position="200"/>
        <end position="231"/>
    </location>
</feature>
<feature type="transmembrane region" description="Helical; Name=5" evidence="3">
    <location>
        <begin position="232"/>
        <end position="252"/>
    </location>
</feature>
<feature type="topological domain" description="Cytoplasmic" evidence="4">
    <location>
        <begin position="253"/>
        <end position="280"/>
    </location>
</feature>
<feature type="transmembrane region" description="Helical; Name=6" evidence="3">
    <location>
        <begin position="281"/>
        <end position="303"/>
    </location>
</feature>
<feature type="repeat" description="Solcar 1">
    <location>
        <begin position="2"/>
        <end position="98"/>
    </location>
</feature>
<feature type="repeat" description="Solcar 2">
    <location>
        <begin position="118"/>
        <end position="206"/>
    </location>
</feature>
<feature type="modified residue" description="N-acetylalanine" evidence="2">
    <location>
        <position position="2"/>
    </location>
</feature>
<feature type="sequence conflict" description="In Ref. 2; AAX08948." ref="2">
    <original>V</original>
    <variation>I</variation>
    <location>
        <position position="82"/>
    </location>
</feature>
<feature type="sequence conflict" description="In Ref. 1; BAA95942." evidence="4" ref="1">
    <original>S</original>
    <variation>F</variation>
    <location>
        <position position="165"/>
    </location>
</feature>
<feature type="sequence conflict" description="In Ref. 3; AAI50081." evidence="4" ref="3">
    <original>I</original>
    <variation>V</variation>
    <location>
        <position position="261"/>
    </location>
</feature>
<reference key="1">
    <citation type="submission" date="2000-05" db="EMBL/GenBank/DDBJ databases">
        <title>Identification of an evolutionary conserved mitochondrial carrier family from various organisms.</title>
        <authorList>
            <person name="Jang J.S."/>
            <person name="Hahn Y."/>
            <person name="Park C."/>
            <person name="Chung J.H."/>
        </authorList>
    </citation>
    <scope>NUCLEOTIDE SEQUENCE [MRNA]</scope>
</reference>
<reference key="2">
    <citation type="journal article" date="2005" name="BMC Genomics">
        <title>Characterization of 954 bovine full-CDS cDNA sequences.</title>
        <authorList>
            <person name="Harhay G.P."/>
            <person name="Sonstegard T.S."/>
            <person name="Keele J.W."/>
            <person name="Heaton M.P."/>
            <person name="Clawson M.L."/>
            <person name="Snelling W.M."/>
            <person name="Wiedmann R.T."/>
            <person name="Van Tassell C.P."/>
            <person name="Smith T.P.L."/>
        </authorList>
    </citation>
    <scope>NUCLEOTIDE SEQUENCE [LARGE SCALE MRNA]</scope>
</reference>
<reference key="3">
    <citation type="submission" date="2007-07" db="EMBL/GenBank/DDBJ databases">
        <authorList>
            <consortium name="NIH - Mammalian Gene Collection (MGC) project"/>
        </authorList>
    </citation>
    <scope>NUCLEOTIDE SEQUENCE [LARGE SCALE MRNA]</scope>
</reference>
<evidence type="ECO:0000250" key="1">
    <source>
        <dbReference type="UniProtKB" id="Q791V5"/>
    </source>
</evidence>
<evidence type="ECO:0000250" key="2">
    <source>
        <dbReference type="UniProtKB" id="Q9Y6C9"/>
    </source>
</evidence>
<evidence type="ECO:0000255" key="3"/>
<evidence type="ECO:0000305" key="4"/>
<proteinExistence type="evidence at transcript level"/>
<gene>
    <name type="primary">MTCH2</name>
</gene>